<reference key="1">
    <citation type="submission" date="1995-11" db="EMBL/GenBank/DDBJ databases">
        <authorList>
            <person name="Tomita H."/>
        </authorList>
    </citation>
    <scope>NUCLEOTIDE SEQUENCE [GENOMIC DNA]</scope>
</reference>
<name>YY10_ENTFL</name>
<sequence>MLITTSEKLYGVEYETLDVVFGVTTHSKNIVKNIGAGLKNLVGGEIKAYTEMQQEARKIAMDRLKEEAKNIGADAIIAMRFDSGSISNDMQSVVAYGTAVKFKNQ</sequence>
<proteinExistence type="inferred from homology"/>
<accession>Q47776</accession>
<evidence type="ECO:0000305" key="1"/>
<feature type="chain" id="PRO_0000138491" description="UPF0145 protein">
    <location>
        <begin position="1"/>
        <end position="105"/>
    </location>
</feature>
<comment type="similarity">
    <text evidence="1">Belongs to the UPF0145 family.</text>
</comment>
<organism>
    <name type="scientific">Enterococcus faecalis</name>
    <name type="common">Streptococcus faecalis</name>
    <dbReference type="NCBI Taxonomy" id="1351"/>
    <lineage>
        <taxon>Bacteria</taxon>
        <taxon>Bacillati</taxon>
        <taxon>Bacillota</taxon>
        <taxon>Bacilli</taxon>
        <taxon>Lactobacillales</taxon>
        <taxon>Enterococcaceae</taxon>
        <taxon>Enterococcus</taxon>
    </lineage>
</organism>
<keyword id="KW-0614">Plasmid</keyword>
<dbReference type="EMBL" id="D78257">
    <property type="protein sequence ID" value="BAA11327.1"/>
    <property type="molecule type" value="Genomic_DNA"/>
</dbReference>
<dbReference type="RefSeq" id="WP_002394802.1">
    <property type="nucleotide sequence ID" value="NZ_WYAE01000029.1"/>
</dbReference>
<dbReference type="RefSeq" id="YP_004032942.1">
    <property type="nucleotide sequence ID" value="NC_014726.1"/>
</dbReference>
<dbReference type="SMR" id="Q47776"/>
<dbReference type="Gene3D" id="3.30.110.70">
    <property type="entry name" value="Hypothetical protein apc22750. Chain B"/>
    <property type="match status" value="1"/>
</dbReference>
<dbReference type="HAMAP" id="MF_00338">
    <property type="entry name" value="UPF0145"/>
    <property type="match status" value="1"/>
</dbReference>
<dbReference type="InterPro" id="IPR035439">
    <property type="entry name" value="UPF0145_dom_sf"/>
</dbReference>
<dbReference type="InterPro" id="IPR002765">
    <property type="entry name" value="UPF0145_YbjQ-like"/>
</dbReference>
<dbReference type="PANTHER" id="PTHR34068:SF2">
    <property type="entry name" value="UPF0145 PROTEIN SCO3412"/>
    <property type="match status" value="1"/>
</dbReference>
<dbReference type="PANTHER" id="PTHR34068">
    <property type="entry name" value="UPF0145 PROTEIN YBJQ"/>
    <property type="match status" value="1"/>
</dbReference>
<dbReference type="Pfam" id="PF01906">
    <property type="entry name" value="YbjQ_1"/>
    <property type="match status" value="1"/>
</dbReference>
<dbReference type="SUPFAM" id="SSF117782">
    <property type="entry name" value="YbjQ-like"/>
    <property type="match status" value="1"/>
</dbReference>
<geneLocation type="plasmid">
    <name>pYI17</name>
</geneLocation>
<protein>
    <recommendedName>
        <fullName>UPF0145 protein</fullName>
    </recommendedName>
    <alternativeName>
        <fullName>ORF10</fullName>
    </alternativeName>
</protein>